<sequence length="75" mass="8514">MSSGGLLLLLGLLTLWAELTPISGQDRPKKPGLRPPRPQKPPCVRECKNDWRCPGEQKCCRYGCIYECRDPIFVK</sequence>
<organism>
    <name type="scientific">Demansia vestigiata</name>
    <name type="common">Lesser black whip snake</name>
    <name type="synonym">Demansia atra</name>
    <dbReference type="NCBI Taxonomy" id="412038"/>
    <lineage>
        <taxon>Eukaryota</taxon>
        <taxon>Metazoa</taxon>
        <taxon>Chordata</taxon>
        <taxon>Craniata</taxon>
        <taxon>Vertebrata</taxon>
        <taxon>Euteleostomi</taxon>
        <taxon>Lepidosauria</taxon>
        <taxon>Squamata</taxon>
        <taxon>Bifurcata</taxon>
        <taxon>Unidentata</taxon>
        <taxon>Episquamata</taxon>
        <taxon>Toxicofera</taxon>
        <taxon>Serpentes</taxon>
        <taxon>Colubroidea</taxon>
        <taxon>Elapidae</taxon>
        <taxon>Notechinae</taxon>
        <taxon>Demansia</taxon>
    </lineage>
</organism>
<evidence type="ECO:0000250" key="1">
    <source>
        <dbReference type="UniProtKB" id="P83952"/>
    </source>
</evidence>
<evidence type="ECO:0000255" key="2"/>
<evidence type="ECO:0000255" key="3">
    <source>
        <dbReference type="PROSITE-ProRule" id="PRU00722"/>
    </source>
</evidence>
<evidence type="ECO:0000256" key="4">
    <source>
        <dbReference type="SAM" id="MobiDB-lite"/>
    </source>
</evidence>
<evidence type="ECO:0000303" key="5">
    <source>
    </source>
</evidence>
<evidence type="ECO:0000305" key="6"/>
<evidence type="ECO:0000305" key="7">
    <source>
    </source>
</evidence>
<comment type="function">
    <text evidence="1">Damages membranes of susceptible bacteria. Has no hemolytic activity. Not toxic to mice. Does not inhibit the proteinases elastase and cathepsin G.</text>
</comment>
<comment type="subcellular location">
    <subcellularLocation>
        <location evidence="7">Secreted</location>
    </subcellularLocation>
</comment>
<comment type="tissue specificity">
    <text evidence="7">Expressed by the venom gland.</text>
</comment>
<comment type="similarity">
    <text evidence="6">Belongs to the venom waprin family.</text>
</comment>
<keyword id="KW-0044">Antibiotic</keyword>
<keyword id="KW-0929">Antimicrobial</keyword>
<keyword id="KW-1015">Disulfide bond</keyword>
<keyword id="KW-0964">Secreted</keyword>
<keyword id="KW-0732">Signal</keyword>
<feature type="signal peptide" evidence="2">
    <location>
        <begin position="1"/>
        <end position="24"/>
    </location>
</feature>
<feature type="chain" id="PRO_5000395633" description="Veswaprin-b">
    <location>
        <begin position="25"/>
        <end position="75"/>
    </location>
</feature>
<feature type="domain" description="WAP; atypical" evidence="3">
    <location>
        <begin position="27"/>
        <end position="72"/>
    </location>
</feature>
<feature type="region of interest" description="Disordered" evidence="4">
    <location>
        <begin position="23"/>
        <end position="42"/>
    </location>
</feature>
<feature type="disulfide bond" evidence="3">
    <location>
        <begin position="43"/>
        <end position="64"/>
    </location>
</feature>
<feature type="disulfide bond" evidence="3">
    <location>
        <begin position="47"/>
        <end position="59"/>
    </location>
</feature>
<feature type="disulfide bond" evidence="3">
    <location>
        <begin position="53"/>
        <end position="68"/>
    </location>
</feature>
<protein>
    <recommendedName>
        <fullName evidence="5">Veswaprin-b</fullName>
    </recommendedName>
</protein>
<name>WAPB_DEMVE</name>
<reference key="1">
    <citation type="journal article" date="2008" name="Cell. Mol. Life Sci.">
        <title>Common evolution of waprin and Kunitz-like toxin families in Australian venomous snakes.</title>
        <authorList>
            <person name="St Pierre L."/>
            <person name="Earl S.T."/>
            <person name="Filippovich I."/>
            <person name="Sorokina N."/>
            <person name="Masci P.P."/>
            <person name="De Jersey J."/>
            <person name="Lavin M.F."/>
        </authorList>
    </citation>
    <scope>NUCLEOTIDE SEQUENCE [GENOMIC DNA]</scope>
    <source>
        <tissue>Venom gland</tissue>
    </source>
</reference>
<dbReference type="EMBL" id="EU401833">
    <property type="protein sequence ID" value="ACC77782.1"/>
    <property type="molecule type" value="Genomic_DNA"/>
</dbReference>
<dbReference type="SMR" id="B5L5P5"/>
<dbReference type="GO" id="GO:0005576">
    <property type="term" value="C:extracellular region"/>
    <property type="evidence" value="ECO:0000250"/>
    <property type="project" value="UniProtKB"/>
</dbReference>
<dbReference type="GO" id="GO:0005615">
    <property type="term" value="C:extracellular space"/>
    <property type="evidence" value="ECO:0007669"/>
    <property type="project" value="TreeGrafter"/>
</dbReference>
<dbReference type="GO" id="GO:0004867">
    <property type="term" value="F:serine-type endopeptidase inhibitor activity"/>
    <property type="evidence" value="ECO:0007669"/>
    <property type="project" value="TreeGrafter"/>
</dbReference>
<dbReference type="GO" id="GO:0019731">
    <property type="term" value="P:antibacterial humoral response"/>
    <property type="evidence" value="ECO:0007669"/>
    <property type="project" value="TreeGrafter"/>
</dbReference>
<dbReference type="GO" id="GO:0045087">
    <property type="term" value="P:innate immune response"/>
    <property type="evidence" value="ECO:0007669"/>
    <property type="project" value="TreeGrafter"/>
</dbReference>
<dbReference type="GO" id="GO:0044278">
    <property type="term" value="P:venom-mediated disruption of cell wall in another organism"/>
    <property type="evidence" value="ECO:0000250"/>
    <property type="project" value="UniProtKB"/>
</dbReference>
<dbReference type="Gene3D" id="4.10.75.10">
    <property type="entry name" value="Elafin-like"/>
    <property type="match status" value="1"/>
</dbReference>
<dbReference type="InterPro" id="IPR036645">
    <property type="entry name" value="Elafin-like_sf"/>
</dbReference>
<dbReference type="InterPro" id="IPR008197">
    <property type="entry name" value="WAP_dom"/>
</dbReference>
<dbReference type="InterPro" id="IPR050514">
    <property type="entry name" value="WAP_four-disulfide_core"/>
</dbReference>
<dbReference type="PANTHER" id="PTHR19441:SF44">
    <property type="entry name" value="ANTILEUKOPROTEINASE"/>
    <property type="match status" value="1"/>
</dbReference>
<dbReference type="PANTHER" id="PTHR19441">
    <property type="entry name" value="WHEY ACDIC PROTEIN WAP"/>
    <property type="match status" value="1"/>
</dbReference>
<dbReference type="Pfam" id="PF00095">
    <property type="entry name" value="WAP"/>
    <property type="match status" value="1"/>
</dbReference>
<dbReference type="SMART" id="SM00217">
    <property type="entry name" value="WAP"/>
    <property type="match status" value="1"/>
</dbReference>
<dbReference type="SUPFAM" id="SSF57256">
    <property type="entry name" value="Elafin-like"/>
    <property type="match status" value="1"/>
</dbReference>
<dbReference type="PROSITE" id="PS51390">
    <property type="entry name" value="WAP"/>
    <property type="match status" value="1"/>
</dbReference>
<accession>B5L5P5</accession>
<proteinExistence type="inferred from homology"/>